<name>RFCL_HALLT</name>
<reference key="1">
    <citation type="journal article" date="2016" name="Stand. Genomic Sci.">
        <title>Complete genome sequence of the Antarctic Halorubrum lacusprofundi type strain ACAM 34.</title>
        <authorList>
            <person name="Anderson I.J."/>
            <person name="DasSarma P."/>
            <person name="Lucas S."/>
            <person name="Copeland A."/>
            <person name="Lapidus A."/>
            <person name="Del Rio T.G."/>
            <person name="Tice H."/>
            <person name="Dalin E."/>
            <person name="Bruce D.C."/>
            <person name="Goodwin L."/>
            <person name="Pitluck S."/>
            <person name="Sims D."/>
            <person name="Brettin T.S."/>
            <person name="Detter J.C."/>
            <person name="Han C.S."/>
            <person name="Larimer F."/>
            <person name="Hauser L."/>
            <person name="Land M."/>
            <person name="Ivanova N."/>
            <person name="Richardson P."/>
            <person name="Cavicchioli R."/>
            <person name="DasSarma S."/>
            <person name="Woese C.R."/>
            <person name="Kyrpides N.C."/>
        </authorList>
    </citation>
    <scope>NUCLEOTIDE SEQUENCE [LARGE SCALE GENOMIC DNA]</scope>
    <source>
        <strain>ATCC 49239 / DSM 5036 / JCM 8891 / ACAM 34</strain>
    </source>
</reference>
<comment type="function">
    <text evidence="1">Part of the RFC clamp loader complex which loads the PCNA sliding clamp onto DNA.</text>
</comment>
<comment type="subunit">
    <text evidence="1">Heteromultimer composed of small subunits (RfcS) and large subunits (RfcL).</text>
</comment>
<comment type="similarity">
    <text evidence="1">Belongs to the activator 1 small subunits family. RfcL subfamily.</text>
</comment>
<organism>
    <name type="scientific">Halorubrum lacusprofundi (strain ATCC 49239 / DSM 5036 / JCM 8891 / ACAM 34)</name>
    <dbReference type="NCBI Taxonomy" id="416348"/>
    <lineage>
        <taxon>Archaea</taxon>
        <taxon>Methanobacteriati</taxon>
        <taxon>Methanobacteriota</taxon>
        <taxon>Stenosarchaea group</taxon>
        <taxon>Halobacteria</taxon>
        <taxon>Halobacteriales</taxon>
        <taxon>Haloferacaceae</taxon>
        <taxon>Halorubrum</taxon>
    </lineage>
</organism>
<proteinExistence type="inferred from homology"/>
<feature type="chain" id="PRO_1000185052" description="Replication factor C large subunit">
    <location>
        <begin position="1"/>
        <end position="500"/>
    </location>
</feature>
<feature type="region of interest" description="Disordered" evidence="2">
    <location>
        <begin position="443"/>
        <end position="500"/>
    </location>
</feature>
<feature type="compositionally biased region" description="Low complexity" evidence="2">
    <location>
        <begin position="455"/>
        <end position="466"/>
    </location>
</feature>
<feature type="compositionally biased region" description="Acidic residues" evidence="2">
    <location>
        <begin position="467"/>
        <end position="492"/>
    </location>
</feature>
<feature type="binding site" evidence="1">
    <location>
        <begin position="44"/>
        <end position="51"/>
    </location>
    <ligand>
        <name>ATP</name>
        <dbReference type="ChEBI" id="CHEBI:30616"/>
    </ligand>
</feature>
<dbReference type="EMBL" id="CP001365">
    <property type="protein sequence ID" value="ACM57389.1"/>
    <property type="molecule type" value="Genomic_DNA"/>
</dbReference>
<dbReference type="RefSeq" id="WP_015910525.1">
    <property type="nucleotide sequence ID" value="NC_012029.1"/>
</dbReference>
<dbReference type="SMR" id="B9LPV1"/>
<dbReference type="GeneID" id="7399684"/>
<dbReference type="KEGG" id="hla:Hlac_1810"/>
<dbReference type="eggNOG" id="arCOG00470">
    <property type="taxonomic scope" value="Archaea"/>
</dbReference>
<dbReference type="HOGENOM" id="CLU_027255_1_0_2"/>
<dbReference type="Proteomes" id="UP000000740">
    <property type="component" value="Chromosome 1"/>
</dbReference>
<dbReference type="GO" id="GO:0005524">
    <property type="term" value="F:ATP binding"/>
    <property type="evidence" value="ECO:0007669"/>
    <property type="project" value="UniProtKB-UniRule"/>
</dbReference>
<dbReference type="GO" id="GO:0016887">
    <property type="term" value="F:ATP hydrolysis activity"/>
    <property type="evidence" value="ECO:0007669"/>
    <property type="project" value="InterPro"/>
</dbReference>
<dbReference type="GO" id="GO:0003689">
    <property type="term" value="F:DNA clamp loader activity"/>
    <property type="evidence" value="ECO:0007669"/>
    <property type="project" value="UniProtKB-UniRule"/>
</dbReference>
<dbReference type="GO" id="GO:0006260">
    <property type="term" value="P:DNA replication"/>
    <property type="evidence" value="ECO:0007669"/>
    <property type="project" value="UniProtKB-UniRule"/>
</dbReference>
<dbReference type="CDD" id="cd00009">
    <property type="entry name" value="AAA"/>
    <property type="match status" value="1"/>
</dbReference>
<dbReference type="CDD" id="cd18140">
    <property type="entry name" value="HLD_clamp_RFC"/>
    <property type="match status" value="1"/>
</dbReference>
<dbReference type="Gene3D" id="1.10.8.60">
    <property type="match status" value="1"/>
</dbReference>
<dbReference type="Gene3D" id="3.40.50.300">
    <property type="entry name" value="P-loop containing nucleotide triphosphate hydrolases"/>
    <property type="match status" value="1"/>
</dbReference>
<dbReference type="HAMAP" id="MF_01508">
    <property type="entry name" value="RfcL"/>
    <property type="match status" value="1"/>
</dbReference>
<dbReference type="InterPro" id="IPR003593">
    <property type="entry name" value="AAA+_ATPase"/>
</dbReference>
<dbReference type="InterPro" id="IPR003959">
    <property type="entry name" value="ATPase_AAA_core"/>
</dbReference>
<dbReference type="InterPro" id="IPR027417">
    <property type="entry name" value="P-loop_NTPase"/>
</dbReference>
<dbReference type="InterPro" id="IPR023935">
    <property type="entry name" value="Rep_factor-C_lsu"/>
</dbReference>
<dbReference type="InterPro" id="IPR047854">
    <property type="entry name" value="RFC_lid"/>
</dbReference>
<dbReference type="NCBIfam" id="NF003228">
    <property type="entry name" value="PRK04195.1-4"/>
    <property type="match status" value="1"/>
</dbReference>
<dbReference type="NCBIfam" id="NF003229">
    <property type="entry name" value="PRK04195.1-5"/>
    <property type="match status" value="1"/>
</dbReference>
<dbReference type="PANTHER" id="PTHR23389">
    <property type="entry name" value="CHROMOSOME TRANSMISSION FIDELITY FACTOR 18"/>
    <property type="match status" value="1"/>
</dbReference>
<dbReference type="PANTHER" id="PTHR23389:SF6">
    <property type="entry name" value="REPLICATION FACTOR C SUBUNIT 1"/>
    <property type="match status" value="1"/>
</dbReference>
<dbReference type="Pfam" id="PF00004">
    <property type="entry name" value="AAA"/>
    <property type="match status" value="1"/>
</dbReference>
<dbReference type="Pfam" id="PF21960">
    <property type="entry name" value="RCF1-5-like_lid"/>
    <property type="match status" value="1"/>
</dbReference>
<dbReference type="SMART" id="SM00382">
    <property type="entry name" value="AAA"/>
    <property type="match status" value="1"/>
</dbReference>
<dbReference type="SUPFAM" id="SSF52540">
    <property type="entry name" value="P-loop containing nucleoside triphosphate hydrolases"/>
    <property type="match status" value="1"/>
</dbReference>
<protein>
    <recommendedName>
        <fullName evidence="1">Replication factor C large subunit</fullName>
        <shortName evidence="1">RFC large subunit</shortName>
    </recommendedName>
    <alternativeName>
        <fullName evidence="1">Clamp loader large subunit</fullName>
    </alternativeName>
</protein>
<keyword id="KW-0067">ATP-binding</keyword>
<keyword id="KW-0235">DNA replication</keyword>
<keyword id="KW-0547">Nucleotide-binding</keyword>
<keyword id="KW-1185">Reference proteome</keyword>
<gene>
    <name evidence="1" type="primary">rfcL</name>
    <name type="ordered locus">Hlac_1810</name>
</gene>
<evidence type="ECO:0000255" key="1">
    <source>
        <dbReference type="HAMAP-Rule" id="MF_01508"/>
    </source>
</evidence>
<evidence type="ECO:0000256" key="2">
    <source>
        <dbReference type="SAM" id="MobiDB-lite"/>
    </source>
</evidence>
<accession>B9LPV1</accession>
<sequence>MADWTEKYRPSTLSEVRGNDKARDAFADWARSWDDHHEAVVLHGSPGVGKTSAAHALANDMGWETVELNASDQRTADVIERFAGRAARNATLGGSAAGGGAAGGDTASRQLVILDEADNIHGNYDRGGASAITELVKESGQPIVLIANDYYDMARGLRNATQEIEFRDVSARSIVPVLRDICRKEGIEFESDALERIAERNRGDLRGAINDLQAATEGRDSIAVEDVVTGDRDKALGLFPYLDAVLKEESAEEALQSAYAVDETPDDLTKWIENNVLDVYDPSEVVRAYDFLANADVWLGRVRATQNYSYWRYATDNAAAGVAAARDGTKGGWTRYGRPQFWSPSDATADEVVGQIAAKSGCSVATARREVLPFLEAVTHHCKPRELTVAMAAAYDLDEAGIAFVTGSGESTNKVASIAEDAQALREERMEDHAEGAFAGGRHAADDLGASDGETTNASGTASSSGDDGDADGTTDGDGSDANDGNDDDDDGQAGLSDFV</sequence>